<keyword id="KW-0150">Chloroplast</keyword>
<keyword id="KW-0472">Membrane</keyword>
<keyword id="KW-0520">NAD</keyword>
<keyword id="KW-0521">NADP</keyword>
<keyword id="KW-0934">Plastid</keyword>
<keyword id="KW-0618">Plastoquinone</keyword>
<keyword id="KW-0874">Quinone</keyword>
<keyword id="KW-0793">Thylakoid</keyword>
<keyword id="KW-1278">Translocase</keyword>
<keyword id="KW-0812">Transmembrane</keyword>
<keyword id="KW-1133">Transmembrane helix</keyword>
<keyword id="KW-0813">Transport</keyword>
<sequence length="180" mass="19857">MNRPESIYDLLLAPLTLSLIFGGIGVVLLTNIIYSALSLGLVLICISFFYIILNADFVAVAQILIYIGAVNILILFAVMLMNNPKYPNYAPPWTVGDSISSIVCTSLFCSLITIILNISWFGISLTQKSDQMLERDLTNNIQRIGAHLSTDFFLPFELISIILLVALIGAITIARREETV</sequence>
<accession>B1VKI7</accession>
<comment type="function">
    <text evidence="1">NDH shuttles electrons from NAD(P)H:plastoquinone, via FMN and iron-sulfur (Fe-S) centers, to quinones in the photosynthetic chain and possibly in a chloroplast respiratory chain. The immediate electron acceptor for the enzyme in this species is believed to be plastoquinone. Couples the redox reaction to proton translocation, and thus conserves the redox energy in a proton gradient (By similarity).</text>
</comment>
<comment type="catalytic activity">
    <reaction>
        <text>a plastoquinone + NADH + (n+1) H(+)(in) = a plastoquinol + NAD(+) + n H(+)(out)</text>
        <dbReference type="Rhea" id="RHEA:42608"/>
        <dbReference type="Rhea" id="RHEA-COMP:9561"/>
        <dbReference type="Rhea" id="RHEA-COMP:9562"/>
        <dbReference type="ChEBI" id="CHEBI:15378"/>
        <dbReference type="ChEBI" id="CHEBI:17757"/>
        <dbReference type="ChEBI" id="CHEBI:57540"/>
        <dbReference type="ChEBI" id="CHEBI:57945"/>
        <dbReference type="ChEBI" id="CHEBI:62192"/>
    </reaction>
</comment>
<comment type="catalytic activity">
    <reaction>
        <text>a plastoquinone + NADPH + (n+1) H(+)(in) = a plastoquinol + NADP(+) + n H(+)(out)</text>
        <dbReference type="Rhea" id="RHEA:42612"/>
        <dbReference type="Rhea" id="RHEA-COMP:9561"/>
        <dbReference type="Rhea" id="RHEA-COMP:9562"/>
        <dbReference type="ChEBI" id="CHEBI:15378"/>
        <dbReference type="ChEBI" id="CHEBI:17757"/>
        <dbReference type="ChEBI" id="CHEBI:57783"/>
        <dbReference type="ChEBI" id="CHEBI:58349"/>
        <dbReference type="ChEBI" id="CHEBI:62192"/>
    </reaction>
</comment>
<comment type="subunit">
    <text evidence="1">NDH is composed of at least 16 different subunits, 5 of which are encoded in the nucleus.</text>
</comment>
<comment type="subcellular location">
    <subcellularLocation>
        <location evidence="1">Plastid</location>
        <location evidence="1">Chloroplast thylakoid membrane</location>
        <topology evidence="1">Multi-pass membrane protein</topology>
    </subcellularLocation>
</comment>
<comment type="similarity">
    <text evidence="3">Belongs to the complex I subunit 6 family.</text>
</comment>
<dbReference type="EC" id="7.1.1.-"/>
<dbReference type="EMBL" id="AP009377">
    <property type="protein sequence ID" value="BAG16698.1"/>
    <property type="molecule type" value="Genomic_DNA"/>
</dbReference>
<dbReference type="RefSeq" id="YP_001806700.1">
    <property type="nucleotide sequence ID" value="NC_010548.1"/>
</dbReference>
<dbReference type="SMR" id="B1VKI7"/>
<dbReference type="GeneID" id="6166578"/>
<dbReference type="KEGG" id="cjf:6166578"/>
<dbReference type="OrthoDB" id="1893972at2759"/>
<dbReference type="GO" id="GO:0009535">
    <property type="term" value="C:chloroplast thylakoid membrane"/>
    <property type="evidence" value="ECO:0007669"/>
    <property type="project" value="UniProtKB-SubCell"/>
</dbReference>
<dbReference type="GO" id="GO:0008137">
    <property type="term" value="F:NADH dehydrogenase (ubiquinone) activity"/>
    <property type="evidence" value="ECO:0007669"/>
    <property type="project" value="InterPro"/>
</dbReference>
<dbReference type="GO" id="GO:0048038">
    <property type="term" value="F:quinone binding"/>
    <property type="evidence" value="ECO:0007669"/>
    <property type="project" value="UniProtKB-KW"/>
</dbReference>
<dbReference type="FunFam" id="1.20.120.1200:FF:000002">
    <property type="entry name" value="NAD(P)H-quinone oxidoreductase subunit 6, chloroplastic"/>
    <property type="match status" value="1"/>
</dbReference>
<dbReference type="Gene3D" id="1.20.120.1200">
    <property type="entry name" value="NADH-ubiquinone/plastoquinone oxidoreductase chain 6, subunit NuoJ"/>
    <property type="match status" value="1"/>
</dbReference>
<dbReference type="InterPro" id="IPR050290">
    <property type="entry name" value="NAD(P)H-Q_Oxidoreduct_6"/>
</dbReference>
<dbReference type="InterPro" id="IPR001457">
    <property type="entry name" value="NADH_UbQ/plastoQ_OxRdtase_su6"/>
</dbReference>
<dbReference type="InterPro" id="IPR042106">
    <property type="entry name" value="Nuo/plastoQ_OxRdtase_6_NuoJ"/>
</dbReference>
<dbReference type="PANTHER" id="PTHR48479">
    <property type="entry name" value="NAD(P)H-QUINONE OXIDOREDUCTASE SUBUNIT 6, CHLOROPLASTIC"/>
    <property type="match status" value="1"/>
</dbReference>
<dbReference type="PANTHER" id="PTHR48479:SF1">
    <property type="entry name" value="NAD(P)H-QUINONE OXIDOREDUCTASE SUBUNIT 6, CHLOROPLASTIC"/>
    <property type="match status" value="1"/>
</dbReference>
<dbReference type="Pfam" id="PF00499">
    <property type="entry name" value="Oxidored_q3"/>
    <property type="match status" value="1"/>
</dbReference>
<organism>
    <name type="scientific">Cryptomeria japonica</name>
    <name type="common">Japanese cedar</name>
    <name type="synonym">Cupressus japonica</name>
    <dbReference type="NCBI Taxonomy" id="3369"/>
    <lineage>
        <taxon>Eukaryota</taxon>
        <taxon>Viridiplantae</taxon>
        <taxon>Streptophyta</taxon>
        <taxon>Embryophyta</taxon>
        <taxon>Tracheophyta</taxon>
        <taxon>Spermatophyta</taxon>
        <taxon>Pinopsida</taxon>
        <taxon>Pinidae</taxon>
        <taxon>Conifers II</taxon>
        <taxon>Cupressales</taxon>
        <taxon>Cupressaceae</taxon>
        <taxon>Cryptomeria</taxon>
    </lineage>
</organism>
<gene>
    <name type="primary">ndhG</name>
</gene>
<feature type="chain" id="PRO_0000360245" description="NAD(P)H-quinone oxidoreductase subunit 6, chloroplastic">
    <location>
        <begin position="1"/>
        <end position="180"/>
    </location>
</feature>
<feature type="transmembrane region" description="Helical" evidence="2">
    <location>
        <begin position="10"/>
        <end position="30"/>
    </location>
</feature>
<feature type="transmembrane region" description="Helical" evidence="2">
    <location>
        <begin position="32"/>
        <end position="52"/>
    </location>
</feature>
<feature type="transmembrane region" description="Helical" evidence="2">
    <location>
        <begin position="57"/>
        <end position="77"/>
    </location>
</feature>
<feature type="transmembrane region" description="Helical" evidence="2">
    <location>
        <begin position="102"/>
        <end position="122"/>
    </location>
</feature>
<feature type="transmembrane region" description="Helical" evidence="2">
    <location>
        <begin position="153"/>
        <end position="173"/>
    </location>
</feature>
<reference key="1">
    <citation type="journal article" date="2008" name="BMC Plant Biol.">
        <title>Complete nucleotide sequence of the Cryptomeria japonica D. Don. chloroplast genome and comparative chloroplast genomics: diversified genomic structure of coniferous species.</title>
        <authorList>
            <person name="Hirao T."/>
            <person name="Watanabe A."/>
            <person name="Kurita M."/>
            <person name="Kondo T."/>
            <person name="Takata K."/>
        </authorList>
    </citation>
    <scope>NUCLEOTIDE SEQUENCE [LARGE SCALE GENOMIC DNA]</scope>
</reference>
<name>NU6C_CRYJA</name>
<geneLocation type="chloroplast"/>
<proteinExistence type="inferred from homology"/>
<protein>
    <recommendedName>
        <fullName>NAD(P)H-quinone oxidoreductase subunit 6, chloroplastic</fullName>
        <ecNumber>7.1.1.-</ecNumber>
    </recommendedName>
    <alternativeName>
        <fullName>NAD(P)H dehydrogenase subunit 6</fullName>
    </alternativeName>
    <alternativeName>
        <fullName>NADH-plastoquinone oxidoreductase subunit 6</fullName>
    </alternativeName>
</protein>
<evidence type="ECO:0000250" key="1"/>
<evidence type="ECO:0000255" key="2"/>
<evidence type="ECO:0000305" key="3"/>